<feature type="signal peptide" evidence="3">
    <location>
        <begin position="1"/>
        <end position="24"/>
    </location>
</feature>
<feature type="chain" id="PRO_0000015057" description="Neuronal cell adhesion molecule">
    <location>
        <begin position="25"/>
        <end position="1304"/>
    </location>
</feature>
<feature type="topological domain" description="Extracellular" evidence="3">
    <location>
        <begin position="25"/>
        <end position="1167"/>
    </location>
</feature>
<feature type="transmembrane region" description="Helical" evidence="3">
    <location>
        <begin position="1168"/>
        <end position="1190"/>
    </location>
</feature>
<feature type="topological domain" description="Cytoplasmic" evidence="3">
    <location>
        <begin position="1191"/>
        <end position="1304"/>
    </location>
</feature>
<feature type="domain" description="Ig-like 1">
    <location>
        <begin position="46"/>
        <end position="134"/>
    </location>
</feature>
<feature type="domain" description="Ig-like 2">
    <location>
        <begin position="141"/>
        <end position="235"/>
    </location>
</feature>
<feature type="domain" description="Ig-like 3">
    <location>
        <begin position="267"/>
        <end position="356"/>
    </location>
</feature>
<feature type="domain" description="Ig-like 4">
    <location>
        <begin position="361"/>
        <end position="448"/>
    </location>
</feature>
<feature type="domain" description="Ig-like 5">
    <location>
        <begin position="454"/>
        <end position="541"/>
    </location>
</feature>
<feature type="domain" description="Ig-like 6">
    <location>
        <begin position="545"/>
        <end position="632"/>
    </location>
</feature>
<feature type="domain" description="Fibronectin type-III 1" evidence="5">
    <location>
        <begin position="649"/>
        <end position="744"/>
    </location>
</feature>
<feature type="domain" description="Fibronectin type-III 2" evidence="5">
    <location>
        <begin position="746"/>
        <end position="843"/>
    </location>
</feature>
<feature type="domain" description="Fibronectin type-III 3" evidence="5">
    <location>
        <begin position="848"/>
        <end position="950"/>
    </location>
</feature>
<feature type="domain" description="Fibronectin type-III 4" evidence="5">
    <location>
        <begin position="954"/>
        <end position="1051"/>
    </location>
</feature>
<feature type="domain" description="Fibronectin type-III 5" evidence="5">
    <location>
        <begin position="1064"/>
        <end position="1156"/>
    </location>
</feature>
<feature type="region of interest" description="Disordered" evidence="6">
    <location>
        <begin position="1199"/>
        <end position="1304"/>
    </location>
</feature>
<feature type="compositionally biased region" description="Basic and acidic residues" evidence="6">
    <location>
        <begin position="1199"/>
        <end position="1219"/>
    </location>
</feature>
<feature type="compositionally biased region" description="Basic and acidic residues" evidence="6">
    <location>
        <begin position="1241"/>
        <end position="1250"/>
    </location>
</feature>
<feature type="compositionally biased region" description="Polar residues" evidence="6">
    <location>
        <begin position="1288"/>
        <end position="1304"/>
    </location>
</feature>
<feature type="modified residue" description="Phosphothreonine" evidence="2">
    <location>
        <position position="1221"/>
    </location>
</feature>
<feature type="modified residue" description="Phosphotyrosine" evidence="2">
    <location>
        <position position="1225"/>
    </location>
</feature>
<feature type="modified residue" description="Phosphoserine" evidence="2">
    <location>
        <position position="1226"/>
    </location>
</feature>
<feature type="modified residue" description="Phosphoserine" evidence="2">
    <location>
        <position position="1251"/>
    </location>
</feature>
<feature type="modified residue" description="Phosphoserine" evidence="2">
    <location>
        <position position="1254"/>
    </location>
</feature>
<feature type="modified residue" description="Phosphoserine" evidence="1">
    <location>
        <position position="1271"/>
    </location>
</feature>
<feature type="modified residue" description="Phosphoserine" evidence="2">
    <location>
        <position position="1290"/>
    </location>
</feature>
<feature type="modified residue" description="Phosphoserine" evidence="2">
    <location>
        <position position="1291"/>
    </location>
</feature>
<feature type="modified residue" description="Phosphoserine" evidence="2">
    <location>
        <position position="1295"/>
    </location>
</feature>
<feature type="glycosylation site" description="N-linked (GlcNAc...) asparagine" evidence="3">
    <location>
        <position position="83"/>
    </location>
</feature>
<feature type="glycosylation site" description="N-linked (GlcNAc...) asparagine" evidence="3">
    <location>
        <position position="223"/>
    </location>
</feature>
<feature type="glycosylation site" description="N-linked (GlcNAc...) asparagine" evidence="3">
    <location>
        <position position="245"/>
    </location>
</feature>
<feature type="glycosylation site" description="N-linked (GlcNAc...) asparagine" evidence="3">
    <location>
        <position position="251"/>
    </location>
</feature>
<feature type="glycosylation site" description="N-linked (GlcNAc...) asparagine" evidence="9 12">
    <location>
        <position position="276"/>
    </location>
</feature>
<feature type="glycosylation site" description="N-linked (GlcNAc...) asparagine" evidence="3">
    <location>
        <position position="314"/>
    </location>
</feature>
<feature type="glycosylation site" description="N-linked (GlcNAc...) asparagine" evidence="3">
    <location>
        <position position="433"/>
    </location>
</feature>
<feature type="glycosylation site" description="N-linked (GlcNAc...) asparagine" evidence="3">
    <location>
        <position position="507"/>
    </location>
</feature>
<feature type="glycosylation site" description="N-linked (GlcNAc...) asparagine" evidence="3">
    <location>
        <position position="619"/>
    </location>
</feature>
<feature type="glycosylation site" description="N-linked (GlcNAc...) asparagine" evidence="3">
    <location>
        <position position="716"/>
    </location>
</feature>
<feature type="glycosylation site" description="N-linked (GlcNAc...) asparagine" evidence="3">
    <location>
        <position position="802"/>
    </location>
</feature>
<feature type="glycosylation site" description="N-linked (GlcNAc...) (complex) asparagine" evidence="11">
    <location>
        <position position="858"/>
    </location>
</feature>
<feature type="glycosylation site" description="N-linked (GlcNAc...) asparagine" evidence="3">
    <location>
        <position position="993"/>
    </location>
</feature>
<feature type="glycosylation site" description="N-linked (GlcNAc...) asparagine" evidence="3">
    <location>
        <position position="1009"/>
    </location>
</feature>
<feature type="glycosylation site" description="N-linked (GlcNAc...) asparagine" evidence="3">
    <location>
        <position position="1019"/>
    </location>
</feature>
<feature type="glycosylation site" description="N-linked (GlcNAc...) asparagine" evidence="3">
    <location>
        <position position="1072"/>
    </location>
</feature>
<feature type="glycosylation site" description="N-linked (GlcNAc...) asparagine" evidence="3">
    <location>
        <position position="1083"/>
    </location>
</feature>
<feature type="glycosylation site" description="N-linked (GlcNAc...) asparagine" evidence="3">
    <location>
        <position position="1115"/>
    </location>
</feature>
<feature type="disulfide bond" evidence="4">
    <location>
        <begin position="68"/>
        <end position="123"/>
    </location>
</feature>
<feature type="disulfide bond" evidence="4">
    <location>
        <begin position="167"/>
        <end position="218"/>
    </location>
</feature>
<feature type="disulfide bond" evidence="4">
    <location>
        <begin position="292"/>
        <end position="340"/>
    </location>
</feature>
<feature type="disulfide bond" evidence="4">
    <location>
        <begin position="382"/>
        <end position="432"/>
    </location>
</feature>
<feature type="disulfide bond" evidence="4">
    <location>
        <begin position="476"/>
        <end position="525"/>
    </location>
</feature>
<feature type="disulfide bond" evidence="4">
    <location>
        <begin position="567"/>
        <end position="616"/>
    </location>
</feature>
<feature type="splice variant" id="VSP_007837" description="In isoform 4." evidence="19">
    <location>
        <begin position="35"/>
        <end position="40"/>
    </location>
</feature>
<feature type="splice variant" id="VSP_007838" description="In isoform 3 and isoform 6." evidence="18 21">
    <location>
        <begin position="241"/>
        <end position="259"/>
    </location>
</feature>
<feature type="splice variant" id="VSP_007839" description="In isoform 4." evidence="19">
    <location>
        <begin position="635"/>
        <end position="644"/>
    </location>
</feature>
<feature type="splice variant" id="VSP_007840" description="In isoform 3 and isoform 4." evidence="19 21">
    <location>
        <begin position="1051"/>
        <end position="1155"/>
    </location>
</feature>
<feature type="splice variant" id="VSP_045040" description="In isoform 6." evidence="18">
    <location>
        <begin position="1063"/>
        <end position="1155"/>
    </location>
</feature>
<feature type="splice variant" id="VSP_007843" description="In isoform 5." evidence="22">
    <original>Y</original>
    <variation>YRSLE</variation>
    <location>
        <position position="1225"/>
    </location>
</feature>
<feature type="splice variant" id="VSP_007841" description="In isoform 2." evidence="22">
    <original>SDAEDHKPLKK</original>
    <variation>RLFSFVSSASF</variation>
    <location>
        <begin position="1226"/>
        <end position="1236"/>
    </location>
</feature>
<feature type="splice variant" id="VSP_007842" description="In isoform 2." evidence="22">
    <location>
        <begin position="1237"/>
        <end position="1304"/>
    </location>
</feature>
<feature type="sequence variant" id="VAR_087388" description="In NEDNMS; uncertain significance; dbSNP:rs1413634373." evidence="14">
    <original>D</original>
    <variation>G</variation>
    <location>
        <position position="55"/>
    </location>
</feature>
<feature type="sequence variant" id="VAR_087389" description="In NEDNMS." evidence="14">
    <location>
        <begin position="111"/>
        <end position="1304"/>
    </location>
</feature>
<feature type="sequence variant" id="VAR_087390" description="In NEDNMS; uncertain significance; dbSNP:rs2153741176." evidence="14">
    <original>S</original>
    <variation>P</variation>
    <location>
        <position position="134"/>
    </location>
</feature>
<feature type="sequence variant" id="VAR_087391" description="In NEDNMS; uncertain significance; dbSNP:rs772993703." evidence="14">
    <original>G</original>
    <variation>D</variation>
    <location>
        <position position="197"/>
    </location>
</feature>
<feature type="sequence variant" id="VAR_087392" description="In NEDNMS; uncertain significance; dbSNP:rs201033539." evidence="14">
    <original>N</original>
    <variation>S</variation>
    <location>
        <position position="469"/>
    </location>
</feature>
<feature type="sequence variant" id="VAR_047550" description="In dbSNP:rs6958498." evidence="7 8 16 17">
    <original>P</original>
    <variation>A</variation>
    <location>
        <position position="545"/>
    </location>
</feature>
<feature type="sequence variant" id="VAR_087393" description="In NEDNMS; uncertain significance; dbSNP:rs150373689." evidence="14">
    <original>R</original>
    <variation>C</variation>
    <location>
        <position position="853"/>
    </location>
</feature>
<feature type="sequence variant" id="VAR_087394" description="In NEDNMS; uncertain significance; dbSNP:rs139634064." evidence="14">
    <original>K</original>
    <variation>T</variation>
    <location>
        <position position="902"/>
    </location>
</feature>
<feature type="sequence variant" id="VAR_087395" description="In NEDNMS; uncertain significance; dbSNP:rs2062777274." evidence="14">
    <original>G</original>
    <variation>D</variation>
    <location>
        <position position="913"/>
    </location>
</feature>
<feature type="sequence variant" id="VAR_087396" description="In NEDNMS." evidence="14">
    <location>
        <begin position="929"/>
        <end position="1304"/>
    </location>
</feature>
<feature type="sequence variant" id="VAR_035528" description="In a breast cancer sample; somatic mutation." evidence="10">
    <original>H</original>
    <variation>P</variation>
    <location>
        <position position="1093"/>
    </location>
</feature>
<feature type="sequence variant" id="VAR_035529" description="In a breast cancer sample; somatic mutation." evidence="10">
    <original>G</original>
    <variation>V</variation>
    <location>
        <position position="1116"/>
    </location>
</feature>
<feature type="sequence conflict" description="In Ref. 9; CAA04507." evidence="22" ref="9">
    <original>E</original>
    <variation>Q</variation>
    <location>
        <position position="487"/>
    </location>
</feature>
<feature type="sequence conflict" description="In Ref. 1; AAC50765." evidence="22" ref="1">
    <original>I</original>
    <variation>IKDATWIVKEI</variation>
    <location>
        <position position="512"/>
    </location>
</feature>
<feature type="sequence conflict" description="In Ref. 1; AAC50765." evidence="22" ref="1">
    <location>
        <begin position="541"/>
        <end position="550"/>
    </location>
</feature>
<feature type="sequence conflict" description="In Ref. 9; CAA04507." evidence="22" ref="9">
    <original>F</original>
    <variation>L</variation>
    <location>
        <position position="651"/>
    </location>
</feature>
<feature type="sequence conflict" description="In Ref. 9; CAA04507." evidence="22" ref="9">
    <original>KFII</original>
    <variation>TIHD</variation>
    <location>
        <begin position="679"/>
        <end position="682"/>
    </location>
</feature>
<feature type="sequence conflict" description="In Ref. 3; BAA20801." evidence="22" ref="3">
    <original>K</original>
    <variation>N</variation>
    <location>
        <position position="710"/>
    </location>
</feature>
<feature type="sequence conflict" description="In Ref. 1; AAC50765." evidence="22" ref="1">
    <original>V</original>
    <variation>E</variation>
    <location>
        <position position="764"/>
    </location>
</feature>
<feature type="sequence conflict" description="In Ref. 9; CAA04507." evidence="22" ref="9">
    <original>S</original>
    <variation>F</variation>
    <location>
        <position position="775"/>
    </location>
</feature>
<feature type="sequence conflict" description="In Ref. 9; CAA04507." evidence="22" ref="9">
    <original>D</original>
    <variation>V</variation>
    <location>
        <position position="790"/>
    </location>
</feature>
<feature type="sequence conflict" description="In Ref. 4; CAD97960." evidence="22" ref="4">
    <original>F</original>
    <variation>L</variation>
    <location>
        <position position="921"/>
    </location>
</feature>
<feature type="sequence conflict" description="In Ref. 9; CAA04507." evidence="22" ref="9">
    <original>A</original>
    <variation>V</variation>
    <location>
        <position position="954"/>
    </location>
</feature>
<feature type="sequence conflict" description="In Ref. 9; CAA04507." evidence="22" ref="9">
    <original>S</original>
    <variation>N</variation>
    <location>
        <position position="994"/>
    </location>
</feature>
<feature type="sequence conflict" description="In Ref. 4; CAD97960." evidence="22" ref="4">
    <original>A</original>
    <variation>T</variation>
    <location>
        <position position="1008"/>
    </location>
</feature>
<feature type="sequence conflict" description="In Ref. 9; CAA04507." evidence="22" ref="9">
    <original>S</original>
    <variation>T</variation>
    <location>
        <position position="1021"/>
    </location>
</feature>
<feature type="sequence conflict" description="In Ref. 1; AAC50765." evidence="22" ref="1">
    <original>P</original>
    <variation>T</variation>
    <location>
        <position position="1068"/>
    </location>
</feature>
<feature type="sequence conflict" description="In Ref. 9; CAA04507." evidence="22" ref="9">
    <original>HV</original>
    <variation>YA</variation>
    <location>
        <begin position="1093"/>
        <end position="1094"/>
    </location>
</feature>
<feature type="sequence conflict" description="In Ref. 9; CAA04507." evidence="22" ref="9">
    <original>V</original>
    <variation>F</variation>
    <location>
        <position position="1134"/>
    </location>
</feature>
<feature type="sequence conflict" description="In Ref. 9; CAA04507." evidence="22" ref="9">
    <original>DSG</original>
    <variation>GPR</variation>
    <location>
        <begin position="1141"/>
        <end position="1143"/>
    </location>
</feature>
<feature type="sequence conflict" description="In Ref. 9; CAA04507." evidence="22" ref="9">
    <original>D</original>
    <variation>G</variation>
    <location>
        <position position="1149"/>
    </location>
</feature>
<feature type="sequence conflict" description="In Ref. 9; CAA04507." evidence="22" ref="9">
    <original>V</original>
    <variation>L</variation>
    <location>
        <position position="1256"/>
    </location>
</feature>
<feature type="strand" evidence="24">
    <location>
        <begin position="651"/>
        <end position="656"/>
    </location>
</feature>
<feature type="strand" evidence="24">
    <location>
        <begin position="659"/>
        <end position="661"/>
    </location>
</feature>
<feature type="strand" evidence="24">
    <location>
        <begin position="663"/>
        <end position="668"/>
    </location>
</feature>
<feature type="strand" evidence="24">
    <location>
        <begin position="677"/>
        <end position="686"/>
    </location>
</feature>
<feature type="turn" evidence="24">
    <location>
        <begin position="687"/>
        <end position="689"/>
    </location>
</feature>
<feature type="strand" evidence="24">
    <location>
        <begin position="694"/>
        <end position="703"/>
    </location>
</feature>
<feature type="strand" evidence="24">
    <location>
        <begin position="706"/>
        <end position="709"/>
    </location>
</feature>
<feature type="strand" evidence="24">
    <location>
        <begin position="720"/>
        <end position="727"/>
    </location>
</feature>
<feature type="strand" evidence="23">
    <location>
        <begin position="853"/>
        <end position="858"/>
    </location>
</feature>
<feature type="strand" evidence="23">
    <location>
        <begin position="861"/>
        <end position="865"/>
    </location>
</feature>
<feature type="helix" evidence="23">
    <location>
        <begin position="871"/>
        <end position="874"/>
    </location>
</feature>
<feature type="strand" evidence="23">
    <location>
        <begin position="878"/>
        <end position="889"/>
    </location>
</feature>
<feature type="strand" evidence="23">
    <location>
        <begin position="901"/>
        <end position="909"/>
    </location>
</feature>
<feature type="strand" evidence="23">
    <location>
        <begin position="911"/>
        <end position="917"/>
    </location>
</feature>
<feature type="strand" evidence="23">
    <location>
        <begin position="923"/>
        <end position="934"/>
    </location>
</feature>
<feature type="strand" evidence="23">
    <location>
        <begin position="936"/>
        <end position="939"/>
    </location>
</feature>
<feature type="strand" evidence="23">
    <location>
        <begin position="943"/>
        <end position="946"/>
    </location>
</feature>
<protein>
    <recommendedName>
        <fullName>Neuronal cell adhesion molecule</fullName>
        <shortName>Nr-CAM</shortName>
    </recommendedName>
    <alternativeName>
        <fullName evidence="20">Neuronal surface protein Bravo</fullName>
        <shortName evidence="20">hBravo</shortName>
    </alternativeName>
    <alternativeName>
        <fullName>NgCAM-related cell adhesion molecule</fullName>
        <shortName>Ng-CAM-related</shortName>
    </alternativeName>
</protein>
<reference key="1">
    <citation type="journal article" date="1996" name="Genomics">
        <title>Characterization of a highly conserved human homolog to the chicken neural cell surface protein Bravo/Nr-CAM that maps to chromosome band 7q31.</title>
        <authorList>
            <person name="Lane R.P."/>
            <person name="Chen X.-N."/>
            <person name="Yamakawa K."/>
            <person name="Vielmetter J."/>
            <person name="Korenberg J.R."/>
            <person name="Dreyer W.J."/>
        </authorList>
    </citation>
    <scope>NUCLEOTIDE SEQUENCE [GENOMIC DNA] (ISOFORM 1)</scope>
    <scope>TISSUE SPECIFICITY</scope>
    <source>
        <tissue>Brain</tissue>
    </source>
</reference>
<reference key="2">
    <citation type="journal article" date="2001" name="Gene">
        <title>The complete sequence of the human locus for NgCAM-related cell adhesion molecule reveals a novel alternative exon in chick and man and conserved genomic organization for the L1 subfamily.</title>
        <authorList>
            <person name="Dry K."/>
            <person name="Kenwrick S."/>
            <person name="Rosenthal A."/>
            <person name="Platzer M."/>
        </authorList>
    </citation>
    <scope>NUCLEOTIDE SEQUENCE [GENOMIC DNA] (ISOFORMS 2 AND 5)</scope>
</reference>
<reference key="3">
    <citation type="journal article" date="1997" name="DNA Res.">
        <title>Prediction of the coding sequences of unidentified human genes. VII. The complete sequences of 100 new cDNA clones from brain which can code for large proteins in vitro.</title>
        <authorList>
            <person name="Nagase T."/>
            <person name="Ishikawa K."/>
            <person name="Nakajima D."/>
            <person name="Ohira M."/>
            <person name="Seki N."/>
            <person name="Miyajima N."/>
            <person name="Tanaka A."/>
            <person name="Kotani H."/>
            <person name="Nomura N."/>
            <person name="Ohara O."/>
        </authorList>
    </citation>
    <scope>NUCLEOTIDE SEQUENCE [LARGE SCALE MRNA] (ISOFORM 3)</scope>
    <scope>VARIANT ALA-545</scope>
    <source>
        <tissue>Brain</tissue>
    </source>
</reference>
<reference key="4">
    <citation type="journal article" date="2007" name="BMC Genomics">
        <title>The full-ORF clone resource of the German cDNA consortium.</title>
        <authorList>
            <person name="Bechtel S."/>
            <person name="Rosenfelder H."/>
            <person name="Duda A."/>
            <person name="Schmidt C.P."/>
            <person name="Ernst U."/>
            <person name="Wellenreuther R."/>
            <person name="Mehrle A."/>
            <person name="Schuster C."/>
            <person name="Bahr A."/>
            <person name="Bloecker H."/>
            <person name="Heubner D."/>
            <person name="Hoerlein A."/>
            <person name="Michel G."/>
            <person name="Wedler H."/>
            <person name="Koehrer K."/>
            <person name="Ottenwaelder B."/>
            <person name="Poustka A."/>
            <person name="Wiemann S."/>
            <person name="Schupp I."/>
        </authorList>
    </citation>
    <scope>NUCLEOTIDE SEQUENCE [LARGE SCALE MRNA] (ISOFORM 4)</scope>
    <source>
        <tissue>Amygdala</tissue>
    </source>
</reference>
<reference key="5">
    <citation type="journal article" date="2003" name="Nature">
        <title>The DNA sequence of human chromosome 7.</title>
        <authorList>
            <person name="Hillier L.W."/>
            <person name="Fulton R.S."/>
            <person name="Fulton L.A."/>
            <person name="Graves T.A."/>
            <person name="Pepin K.H."/>
            <person name="Wagner-McPherson C."/>
            <person name="Layman D."/>
            <person name="Maas J."/>
            <person name="Jaeger S."/>
            <person name="Walker R."/>
            <person name="Wylie K."/>
            <person name="Sekhon M."/>
            <person name="Becker M.C."/>
            <person name="O'Laughlin M.D."/>
            <person name="Schaller M.E."/>
            <person name="Fewell G.A."/>
            <person name="Delehaunty K.D."/>
            <person name="Miner T.L."/>
            <person name="Nash W.E."/>
            <person name="Cordes M."/>
            <person name="Du H."/>
            <person name="Sun H."/>
            <person name="Edwards J."/>
            <person name="Bradshaw-Cordum H."/>
            <person name="Ali J."/>
            <person name="Andrews S."/>
            <person name="Isak A."/>
            <person name="Vanbrunt A."/>
            <person name="Nguyen C."/>
            <person name="Du F."/>
            <person name="Lamar B."/>
            <person name="Courtney L."/>
            <person name="Kalicki J."/>
            <person name="Ozersky P."/>
            <person name="Bielicki L."/>
            <person name="Scott K."/>
            <person name="Holmes A."/>
            <person name="Harkins R."/>
            <person name="Harris A."/>
            <person name="Strong C.M."/>
            <person name="Hou S."/>
            <person name="Tomlinson C."/>
            <person name="Dauphin-Kohlberg S."/>
            <person name="Kozlowicz-Reilly A."/>
            <person name="Leonard S."/>
            <person name="Rohlfing T."/>
            <person name="Rock S.M."/>
            <person name="Tin-Wollam A.-M."/>
            <person name="Abbott A."/>
            <person name="Minx P."/>
            <person name="Maupin R."/>
            <person name="Strowmatt C."/>
            <person name="Latreille P."/>
            <person name="Miller N."/>
            <person name="Johnson D."/>
            <person name="Murray J."/>
            <person name="Woessner J.P."/>
            <person name="Wendl M.C."/>
            <person name="Yang S.-P."/>
            <person name="Schultz B.R."/>
            <person name="Wallis J.W."/>
            <person name="Spieth J."/>
            <person name="Bieri T.A."/>
            <person name="Nelson J.O."/>
            <person name="Berkowicz N."/>
            <person name="Wohldmann P.E."/>
            <person name="Cook L.L."/>
            <person name="Hickenbotham M.T."/>
            <person name="Eldred J."/>
            <person name="Williams D."/>
            <person name="Bedell J.A."/>
            <person name="Mardis E.R."/>
            <person name="Clifton S.W."/>
            <person name="Chissoe S.L."/>
            <person name="Marra M.A."/>
            <person name="Raymond C."/>
            <person name="Haugen E."/>
            <person name="Gillett W."/>
            <person name="Zhou Y."/>
            <person name="James R."/>
            <person name="Phelps K."/>
            <person name="Iadanoto S."/>
            <person name="Bubb K."/>
            <person name="Simms E."/>
            <person name="Levy R."/>
            <person name="Clendenning J."/>
            <person name="Kaul R."/>
            <person name="Kent W.J."/>
            <person name="Furey T.S."/>
            <person name="Baertsch R.A."/>
            <person name="Brent M.R."/>
            <person name="Keibler E."/>
            <person name="Flicek P."/>
            <person name="Bork P."/>
            <person name="Suyama M."/>
            <person name="Bailey J.A."/>
            <person name="Portnoy M.E."/>
            <person name="Torrents D."/>
            <person name="Chinwalla A.T."/>
            <person name="Gish W.R."/>
            <person name="Eddy S.R."/>
            <person name="McPherson J.D."/>
            <person name="Olson M.V."/>
            <person name="Eichler E.E."/>
            <person name="Green E.D."/>
            <person name="Waterston R.H."/>
            <person name="Wilson R.K."/>
        </authorList>
    </citation>
    <scope>NUCLEOTIDE SEQUENCE [LARGE SCALE GENOMIC DNA]</scope>
</reference>
<reference key="6">
    <citation type="journal article" date="2003" name="Science">
        <title>Human chromosome 7: DNA sequence and biology.</title>
        <authorList>
            <person name="Scherer S.W."/>
            <person name="Cheung J."/>
            <person name="MacDonald J.R."/>
            <person name="Osborne L.R."/>
            <person name="Nakabayashi K."/>
            <person name="Herbrick J.-A."/>
            <person name="Carson A.R."/>
            <person name="Parker-Katiraee L."/>
            <person name="Skaug J."/>
            <person name="Khaja R."/>
            <person name="Zhang J."/>
            <person name="Hudek A.K."/>
            <person name="Li M."/>
            <person name="Haddad M."/>
            <person name="Duggan G.E."/>
            <person name="Fernandez B.A."/>
            <person name="Kanematsu E."/>
            <person name="Gentles S."/>
            <person name="Christopoulos C.C."/>
            <person name="Choufani S."/>
            <person name="Kwasnicka D."/>
            <person name="Zheng X.H."/>
            <person name="Lai Z."/>
            <person name="Nusskern D.R."/>
            <person name="Zhang Q."/>
            <person name="Gu Z."/>
            <person name="Lu F."/>
            <person name="Zeesman S."/>
            <person name="Nowaczyk M.J."/>
            <person name="Teshima I."/>
            <person name="Chitayat D."/>
            <person name="Shuman C."/>
            <person name="Weksberg R."/>
            <person name="Zackai E.H."/>
            <person name="Grebe T.A."/>
            <person name="Cox S.R."/>
            <person name="Kirkpatrick S.J."/>
            <person name="Rahman N."/>
            <person name="Friedman J.M."/>
            <person name="Heng H.H.Q."/>
            <person name="Pelicci P.G."/>
            <person name="Lo-Coco F."/>
            <person name="Belloni E."/>
            <person name="Shaffer L.G."/>
            <person name="Pober B."/>
            <person name="Morton C.C."/>
            <person name="Gusella J.F."/>
            <person name="Bruns G.A.P."/>
            <person name="Korf B.R."/>
            <person name="Quade B.J."/>
            <person name="Ligon A.H."/>
            <person name="Ferguson H."/>
            <person name="Higgins A.W."/>
            <person name="Leach N.T."/>
            <person name="Herrick S.R."/>
            <person name="Lemyre E."/>
            <person name="Farra C.G."/>
            <person name="Kim H.-G."/>
            <person name="Summers A.M."/>
            <person name="Gripp K.W."/>
            <person name="Roberts W."/>
            <person name="Szatmari P."/>
            <person name="Winsor E.J.T."/>
            <person name="Grzeschik K.-H."/>
            <person name="Teebi A."/>
            <person name="Minassian B.A."/>
            <person name="Kere J."/>
            <person name="Armengol L."/>
            <person name="Pujana M.A."/>
            <person name="Estivill X."/>
            <person name="Wilson M.D."/>
            <person name="Koop B.F."/>
            <person name="Tosi S."/>
            <person name="Moore G.E."/>
            <person name="Boright A.P."/>
            <person name="Zlotorynski E."/>
            <person name="Kerem B."/>
            <person name="Kroisel P.M."/>
            <person name="Petek E."/>
            <person name="Oscier D.G."/>
            <person name="Mould S.J."/>
            <person name="Doehner H."/>
            <person name="Doehner K."/>
            <person name="Rommens J.M."/>
            <person name="Vincent J.B."/>
            <person name="Venter J.C."/>
            <person name="Li P.W."/>
            <person name="Mural R.J."/>
            <person name="Adams M.D."/>
            <person name="Tsui L.-C."/>
        </authorList>
    </citation>
    <scope>NUCLEOTIDE SEQUENCE [LARGE SCALE GENOMIC DNA]</scope>
    <scope>VARIANT ALA-545</scope>
</reference>
<reference key="7">
    <citation type="submission" date="2005-07" db="EMBL/GenBank/DDBJ databases">
        <authorList>
            <person name="Mural R.J."/>
            <person name="Istrail S."/>
            <person name="Sutton G.G."/>
            <person name="Florea L."/>
            <person name="Halpern A.L."/>
            <person name="Mobarry C.M."/>
            <person name="Lippert R."/>
            <person name="Walenz B."/>
            <person name="Shatkay H."/>
            <person name="Dew I."/>
            <person name="Miller J.R."/>
            <person name="Flanigan M.J."/>
            <person name="Edwards N.J."/>
            <person name="Bolanos R."/>
            <person name="Fasulo D."/>
            <person name="Halldorsson B.V."/>
            <person name="Hannenhalli S."/>
            <person name="Turner R."/>
            <person name="Yooseph S."/>
            <person name="Lu F."/>
            <person name="Nusskern D.R."/>
            <person name="Shue B.C."/>
            <person name="Zheng X.H."/>
            <person name="Zhong F."/>
            <person name="Delcher A.L."/>
            <person name="Huson D.H."/>
            <person name="Kravitz S.A."/>
            <person name="Mouchard L."/>
            <person name="Reinert K."/>
            <person name="Remington K.A."/>
            <person name="Clark A.G."/>
            <person name="Waterman M.S."/>
            <person name="Eichler E.E."/>
            <person name="Adams M.D."/>
            <person name="Hunkapiller M.W."/>
            <person name="Myers E.W."/>
            <person name="Venter J.C."/>
        </authorList>
    </citation>
    <scope>NUCLEOTIDE SEQUENCE [LARGE SCALE GENOMIC DNA]</scope>
    <scope>VARIANT ALA-545</scope>
</reference>
<reference key="8">
    <citation type="journal article" date="2004" name="Genome Res.">
        <title>The status, quality, and expansion of the NIH full-length cDNA project: the Mammalian Gene Collection (MGC).</title>
        <authorList>
            <consortium name="The MGC Project Team"/>
        </authorList>
    </citation>
    <scope>NUCLEOTIDE SEQUENCE [LARGE SCALE MRNA] (ISOFORM 6)</scope>
    <scope>VARIANT ALA-545</scope>
</reference>
<reference key="9">
    <citation type="submission" date="1997-08" db="EMBL/GenBank/DDBJ databases">
        <title>Temporal and spatial regulation of alternative splicing for human NrCAM in neural and non neural tissues.</title>
        <authorList>
            <person name="Wang B."/>
            <person name="Williams H."/>
            <person name="Du J."/>
            <person name="Terrett J."/>
            <person name="Kenwricl S."/>
        </authorList>
    </citation>
    <scope>NUCLEOTIDE SEQUENCE [MRNA] OF 6-1304 (ISOFORM 1)</scope>
    <source>
        <tissue>Brain</tissue>
    </source>
</reference>
<reference key="10">
    <citation type="journal article" date="2005" name="J. Proteome Res.">
        <title>Human plasma N-glycoproteome analysis by immunoaffinity subtraction, hydrazide chemistry, and mass spectrometry.</title>
        <authorList>
            <person name="Liu T."/>
            <person name="Qian W.-J."/>
            <person name="Gritsenko M.A."/>
            <person name="Camp D.G. II"/>
            <person name="Monroe M.E."/>
            <person name="Moore R.J."/>
            <person name="Smith R.D."/>
        </authorList>
    </citation>
    <scope>GLYCOSYLATION [LARGE SCALE ANALYSIS] AT ASN-276</scope>
    <source>
        <tissue>Plasma</tissue>
    </source>
</reference>
<reference key="11">
    <citation type="journal article" date="2009" name="J. Proteome Res.">
        <title>Glycoproteomics analysis of human liver tissue by combination of multiple enzyme digestion and hydrazide chemistry.</title>
        <authorList>
            <person name="Chen R."/>
            <person name="Jiang X."/>
            <person name="Sun D."/>
            <person name="Han G."/>
            <person name="Wang F."/>
            <person name="Ye M."/>
            <person name="Wang L."/>
            <person name="Zou H."/>
        </authorList>
    </citation>
    <scope>GLYCOSYLATION [LARGE SCALE ANALYSIS] AT ASN-276</scope>
    <source>
        <tissue>Liver</tissue>
    </source>
</reference>
<reference key="12">
    <citation type="journal article" date="2009" name="Mol. Cell. Proteomics">
        <title>A strategy for precise and large scale identification of core fucosylated glycoproteins.</title>
        <authorList>
            <person name="Jia W."/>
            <person name="Lu Z."/>
            <person name="Fu Y."/>
            <person name="Wang H.P."/>
            <person name="Wang L.H."/>
            <person name="Chi H."/>
            <person name="Yuan Z.F."/>
            <person name="Zheng Z.B."/>
            <person name="Song L.N."/>
            <person name="Han H.H."/>
            <person name="Liang Y.M."/>
            <person name="Wang J.L."/>
            <person name="Cai Y."/>
            <person name="Zhang Y.K."/>
            <person name="Deng Y.L."/>
            <person name="Ying W.T."/>
            <person name="He S.M."/>
            <person name="Qian X.H."/>
        </authorList>
    </citation>
    <scope>GLYCOSYLATION AT ASN-858</scope>
</reference>
<reference key="13">
    <citation type="journal article" date="2013" name="J. Biol. Chem.">
        <title>Myocilin mediates myelination in the peripheral nervous system through ErbB2/3 signaling.</title>
        <authorList>
            <person name="Kwon H.S."/>
            <person name="Johnson T.V."/>
            <person name="Joe M.K."/>
            <person name="Abu-Asab M."/>
            <person name="Zhang J."/>
            <person name="Chan C.C."/>
            <person name="Tomarev S.I."/>
        </authorList>
    </citation>
    <scope>INTERACTION WITH MYOC</scope>
</reference>
<reference key="14">
    <citation type="journal article" date="2022" name="Am. J. Hum. Genet.">
        <title>Bi-allelic variants in neuronal cell adhesion molecule cause a neurodevelopmental disorder characterized by developmental delay, hypotonia, neuropathy/spasticity.</title>
        <authorList>
            <consortium name="Undiagnosed Diseases Network"/>
            <person name="Kurolap A."/>
            <person name="Kreuder F."/>
            <person name="Gonzaga-Jauregui C."/>
            <person name="Duvdevani M.P."/>
            <person name="Harel T."/>
            <person name="Tammer L."/>
            <person name="Xin B."/>
            <person name="Bakhtiari S."/>
            <person name="Rice J."/>
            <person name="van Eyk C.L."/>
            <person name="Gecz J."/>
            <person name="Mah J.K."/>
            <person name="Atkinson D."/>
            <person name="Cope H."/>
            <person name="Sullivan J.A."/>
            <person name="Douek A.M."/>
            <person name="Colquhoun D."/>
            <person name="Henry J."/>
            <person name="Wlodkowic D."/>
            <person name="Parman Y."/>
            <person name="Candayan A."/>
            <person name="Kocasoy-Orhan E."/>
            <person name="Ilivitzki A."/>
            <person name="Soudry S."/>
            <person name="Leibu R."/>
            <person name="Glaser F."/>
            <person name="Sency V."/>
            <person name="Ast G."/>
            <person name="Shashi V."/>
            <person name="Fahey M.C."/>
            <person name="Battaloglu E."/>
            <person name="Jordanova A."/>
            <person name="Meiner V."/>
            <person name="Innes A.M."/>
            <person name="Wang H."/>
            <person name="Elpeleg O."/>
            <person name="Kruer M.C."/>
            <person name="Kaslin J."/>
            <person name="Baris Feldman H."/>
        </authorList>
    </citation>
    <scope>INVOLVEMENT IN NEDNMS</scope>
    <scope>VARIANTS NEDNMS GLY-55; 111-GLU--VAL-1304 DEL; PRO-134; ASP-197; SER-469; CYS-853; THR-902; ASP-913 AND 929-ARG--VAL-1304 DEL</scope>
</reference>
<reference key="15">
    <citation type="submission" date="2003-11" db="PDB data bank">
        <title>Solution structure of the first fibronectin type III domain of human KIAA0343 protein.</title>
        <authorList>
            <consortium name="RIKEN structural genomics initiative (RSGI)"/>
        </authorList>
    </citation>
    <scope>STRUCTURE BY NMR OF 638-751</scope>
</reference>
<reference key="16">
    <citation type="submission" date="2003-11" db="PDB data bank">
        <title>Solution structure of the third fibronectin III domain of human KIAA0343 protein.</title>
        <authorList>
            <consortium name="RIKEN structural genomics initiative (RSGI)"/>
        </authorList>
    </citation>
    <scope>STRUCTURE BY NMR OF 838-950</scope>
</reference>
<reference key="17">
    <citation type="journal article" date="2006" name="Science">
        <title>The consensus coding sequences of human breast and colorectal cancers.</title>
        <authorList>
            <person name="Sjoeblom T."/>
            <person name="Jones S."/>
            <person name="Wood L.D."/>
            <person name="Parsons D.W."/>
            <person name="Lin J."/>
            <person name="Barber T.D."/>
            <person name="Mandelker D."/>
            <person name="Leary R.J."/>
            <person name="Ptak J."/>
            <person name="Silliman N."/>
            <person name="Szabo S."/>
            <person name="Buckhaults P."/>
            <person name="Farrell C."/>
            <person name="Meeh P."/>
            <person name="Markowitz S.D."/>
            <person name="Willis J."/>
            <person name="Dawson D."/>
            <person name="Willson J.K.V."/>
            <person name="Gazdar A.F."/>
            <person name="Hartigan J."/>
            <person name="Wu L."/>
            <person name="Liu C."/>
            <person name="Parmigiani G."/>
            <person name="Park B.H."/>
            <person name="Bachman K.E."/>
            <person name="Papadopoulos N."/>
            <person name="Vogelstein B."/>
            <person name="Kinzler K.W."/>
            <person name="Velculescu V.E."/>
        </authorList>
    </citation>
    <scope>VARIANTS [LARGE SCALE ANALYSIS] PRO-1093 AND VAL-1116</scope>
</reference>
<evidence type="ECO:0000250" key="1">
    <source>
        <dbReference type="UniProtKB" id="P97686"/>
    </source>
</evidence>
<evidence type="ECO:0000250" key="2">
    <source>
        <dbReference type="UniProtKB" id="Q810U4"/>
    </source>
</evidence>
<evidence type="ECO:0000255" key="3"/>
<evidence type="ECO:0000255" key="4">
    <source>
        <dbReference type="PROSITE-ProRule" id="PRU00114"/>
    </source>
</evidence>
<evidence type="ECO:0000255" key="5">
    <source>
        <dbReference type="PROSITE-ProRule" id="PRU00316"/>
    </source>
</evidence>
<evidence type="ECO:0000256" key="6">
    <source>
        <dbReference type="SAM" id="MobiDB-lite"/>
    </source>
</evidence>
<evidence type="ECO:0000269" key="7">
    <source>
    </source>
</evidence>
<evidence type="ECO:0000269" key="8">
    <source>
    </source>
</evidence>
<evidence type="ECO:0000269" key="9">
    <source>
    </source>
</evidence>
<evidence type="ECO:0000269" key="10">
    <source>
    </source>
</evidence>
<evidence type="ECO:0000269" key="11">
    <source>
    </source>
</evidence>
<evidence type="ECO:0000269" key="12">
    <source>
    </source>
</evidence>
<evidence type="ECO:0000269" key="13">
    <source>
    </source>
</evidence>
<evidence type="ECO:0000269" key="14">
    <source>
    </source>
</evidence>
<evidence type="ECO:0000269" key="15">
    <source>
    </source>
</evidence>
<evidence type="ECO:0000269" key="16">
    <source>
    </source>
</evidence>
<evidence type="ECO:0000269" key="17">
    <source ref="7"/>
</evidence>
<evidence type="ECO:0000303" key="18">
    <source>
    </source>
</evidence>
<evidence type="ECO:0000303" key="19">
    <source>
    </source>
</evidence>
<evidence type="ECO:0000303" key="20">
    <source>
    </source>
</evidence>
<evidence type="ECO:0000303" key="21">
    <source>
    </source>
</evidence>
<evidence type="ECO:0000305" key="22"/>
<evidence type="ECO:0007829" key="23">
    <source>
        <dbReference type="PDB" id="1UEN"/>
    </source>
</evidence>
<evidence type="ECO:0007829" key="24">
    <source>
        <dbReference type="PDB" id="1UEY"/>
    </source>
</evidence>
<organism>
    <name type="scientific">Homo sapiens</name>
    <name type="common">Human</name>
    <dbReference type="NCBI Taxonomy" id="9606"/>
    <lineage>
        <taxon>Eukaryota</taxon>
        <taxon>Metazoa</taxon>
        <taxon>Chordata</taxon>
        <taxon>Craniata</taxon>
        <taxon>Vertebrata</taxon>
        <taxon>Euteleostomi</taxon>
        <taxon>Mammalia</taxon>
        <taxon>Eutheria</taxon>
        <taxon>Euarchontoglires</taxon>
        <taxon>Primates</taxon>
        <taxon>Haplorrhini</taxon>
        <taxon>Catarrhini</taxon>
        <taxon>Hominidae</taxon>
        <taxon>Homo</taxon>
    </lineage>
</organism>
<comment type="function">
    <text evidence="2">Cell adhesion protein that is required for normal responses to cell-cell contacts in brain and in the peripheral nervous system. Plays a role in neurite outgrowth in response to contactin binding. Plays a role in mediating cell-cell contacts between Schwann cells and axons. Plays a role in the formation and maintenance of the nodes of Ranvier on myelinated axons. Nodes of Ranvier contain clustered sodium channels that are crucial for the saltatory propagation of action potentials along myelinated axons. During development, nodes of Ranvier are formed by the fusion of two heminodes. Required for normal clustering of sodium channels at heminodes; not required for the formation of mature nodes with normal sodium channel clusters. Required, together with GLDN, for maintaining NFASC and sodium channel clusters at mature nodes of Ranvier.</text>
</comment>
<comment type="subunit">
    <text evidence="2 13">Constituent of a NFASC/NRCAM/ankyrin-G complex. Detected in a complex with CNTN1 and PTPRB. Interacts with GLDN/gliomedin (By similarity). Interacts with MYOC (PubMed:23897819).</text>
</comment>
<comment type="subcellular location">
    <subcellularLocation>
        <location evidence="2">Cell membrane</location>
        <topology evidence="2">Single-pass type I membrane protein</topology>
    </subcellularLocation>
    <subcellularLocation>
        <location evidence="2">Cell projection</location>
        <location evidence="2">Axon</location>
    </subcellularLocation>
    <subcellularLocation>
        <location evidence="2">Secreted</location>
    </subcellularLocation>
    <text evidence="2">Detected at nodes of Ranvier.</text>
</comment>
<comment type="alternative products">
    <event type="alternative splicing"/>
    <isoform>
        <id>Q92823-1</id>
        <name>1</name>
        <sequence type="displayed"/>
    </isoform>
    <isoform>
        <id>Q92823-2</id>
        <name>2</name>
        <sequence type="described" ref="VSP_007841 VSP_007842"/>
    </isoform>
    <isoform>
        <id>Q92823-3</id>
        <name>3</name>
        <sequence type="described" ref="VSP_007838 VSP_007840"/>
    </isoform>
    <isoform>
        <id>Q92823-4</id>
        <name>4</name>
        <sequence type="described" ref="VSP_007837 VSP_007839 VSP_007840"/>
    </isoform>
    <isoform>
        <id>Q92823-5</id>
        <name>5</name>
        <sequence type="described" ref="VSP_007843"/>
    </isoform>
    <isoform>
        <id>Q92823-6</id>
        <name>6</name>
        <sequence type="described" ref="VSP_007838 VSP_045040"/>
    </isoform>
</comment>
<comment type="tissue specificity">
    <text evidence="15">Detected in all the examined tissues. In the brain it was detected in the amygdala, caudate nucleus, corpus callosum, hippocampus, hypothalamus, substantia nigra, subthalamic nucleus and thalamus.</text>
</comment>
<comment type="disease" evidence="14">
    <disease id="DI-06396">
        <name>Neurodevelopmental disorder with neuromuscular and skeletal abnormalities</name>
        <acronym>NEDNMS</acronym>
        <description>An autosomal recessive disorder characterized by developmental delay apparent from infancy or early childhood, intellectual disability, hypotonia, peripheral neuropathy, and/or spasticity. Disease severity is highly variable. Most affected individuals have skeletal defects and dysmorphic facial features. Some may have ocular or auditory problems, behavioral abnormalities, and non-specific findings on brain imaging.</description>
        <dbReference type="MIM" id="619833"/>
    </disease>
    <text>The disease is caused by variants affecting the gene represented in this entry.</text>
</comment>
<comment type="similarity">
    <text evidence="22">Belongs to the immunoglobulin superfamily. L1/neurofascin/NgCAM family.</text>
</comment>
<comment type="sequence caution" evidence="22">
    <conflict type="erroneous initiation">
        <sequence resource="EMBL-CDS" id="AAC50765"/>
    </conflict>
    <text>Truncated N-terminus.</text>
</comment>
<comment type="sequence caution" evidence="22">
    <conflict type="erroneous initiation">
        <sequence resource="EMBL-CDS" id="BAA20801"/>
    </conflict>
    <text>Extended N-terminus.</text>
</comment>
<comment type="online information" name="Atlas of Genetics and Cytogenetics in Oncology and Haematology">
    <link uri="https://atlasgeneticsoncology.org/gene/41578/NRCAM"/>
</comment>
<proteinExistence type="evidence at protein level"/>
<keyword id="KW-0002">3D-structure</keyword>
<keyword id="KW-0025">Alternative splicing</keyword>
<keyword id="KW-0130">Cell adhesion</keyword>
<keyword id="KW-1003">Cell membrane</keyword>
<keyword id="KW-0966">Cell projection</keyword>
<keyword id="KW-0225">Disease variant</keyword>
<keyword id="KW-1015">Disulfide bond</keyword>
<keyword id="KW-0325">Glycoprotein</keyword>
<keyword id="KW-0393">Immunoglobulin domain</keyword>
<keyword id="KW-0991">Intellectual disability</keyword>
<keyword id="KW-0472">Membrane</keyword>
<keyword id="KW-0597">Phosphoprotein</keyword>
<keyword id="KW-1267">Proteomics identification</keyword>
<keyword id="KW-1185">Reference proteome</keyword>
<keyword id="KW-0677">Repeat</keyword>
<keyword id="KW-0964">Secreted</keyword>
<keyword id="KW-0732">Signal</keyword>
<keyword id="KW-0812">Transmembrane</keyword>
<keyword id="KW-1133">Transmembrane helix</keyword>
<dbReference type="EMBL" id="U55258">
    <property type="protein sequence ID" value="AAC50765.1"/>
    <property type="status" value="ALT_INIT"/>
    <property type="molecule type" value="Genomic_DNA"/>
</dbReference>
<dbReference type="EMBL" id="AF172277">
    <property type="protein sequence ID" value="AAF22282.1"/>
    <property type="molecule type" value="Genomic_DNA"/>
</dbReference>
<dbReference type="EMBL" id="AF172277">
    <property type="protein sequence ID" value="AAF22283.1"/>
    <property type="molecule type" value="Genomic_DNA"/>
</dbReference>
<dbReference type="EMBL" id="AB002341">
    <property type="protein sequence ID" value="BAA20801.2"/>
    <property type="status" value="ALT_INIT"/>
    <property type="molecule type" value="mRNA"/>
</dbReference>
<dbReference type="EMBL" id="BX538010">
    <property type="protein sequence ID" value="CAD97960.1"/>
    <property type="molecule type" value="mRNA"/>
</dbReference>
<dbReference type="EMBL" id="AC005683">
    <property type="status" value="NOT_ANNOTATED_CDS"/>
    <property type="molecule type" value="Genomic_DNA"/>
</dbReference>
<dbReference type="EMBL" id="AC007567">
    <property type="status" value="NOT_ANNOTATED_CDS"/>
    <property type="molecule type" value="Genomic_DNA"/>
</dbReference>
<dbReference type="EMBL" id="CH236947">
    <property type="protein sequence ID" value="EAL24386.1"/>
    <property type="molecule type" value="Genomic_DNA"/>
</dbReference>
<dbReference type="EMBL" id="CH471070">
    <property type="protein sequence ID" value="EAW83429.1"/>
    <property type="molecule type" value="Genomic_DNA"/>
</dbReference>
<dbReference type="EMBL" id="BC115736">
    <property type="protein sequence ID" value="AAI15737.1"/>
    <property type="molecule type" value="mRNA"/>
</dbReference>
<dbReference type="EMBL" id="AJ001054">
    <property type="protein sequence ID" value="CAA04504.1"/>
    <property type="molecule type" value="mRNA"/>
</dbReference>
<dbReference type="EMBL" id="AJ001057">
    <property type="protein sequence ID" value="CAA04507.1"/>
    <property type="molecule type" value="mRNA"/>
</dbReference>
<dbReference type="CCDS" id="CCDS47686.1">
    <molecule id="Q92823-1"/>
</dbReference>
<dbReference type="CCDS" id="CCDS55153.1">
    <molecule id="Q92823-6"/>
</dbReference>
<dbReference type="CCDS" id="CCDS5751.1">
    <molecule id="Q92823-4"/>
</dbReference>
<dbReference type="RefSeq" id="NP_001032209.1">
    <molecule id="Q92823-1"/>
    <property type="nucleotide sequence ID" value="NM_001037132.4"/>
</dbReference>
<dbReference type="RefSeq" id="NP_001180511.1">
    <property type="nucleotide sequence ID" value="NM_001193582.1"/>
</dbReference>
<dbReference type="RefSeq" id="NP_001180512.1">
    <molecule id="Q92823-6"/>
    <property type="nucleotide sequence ID" value="NM_001193583.2"/>
</dbReference>
<dbReference type="RefSeq" id="NP_001180513.1">
    <molecule id="Q92823-3"/>
    <property type="nucleotide sequence ID" value="NM_001193584.2"/>
</dbReference>
<dbReference type="RefSeq" id="NP_001358051.1">
    <molecule id="Q92823-6"/>
    <property type="nucleotide sequence ID" value="NM_001371122.1"/>
</dbReference>
<dbReference type="RefSeq" id="NP_001358060.1">
    <molecule id="Q92823-1"/>
    <property type="nucleotide sequence ID" value="NM_001371131.1"/>
</dbReference>
<dbReference type="RefSeq" id="NP_001358062.1">
    <molecule id="Q92823-4"/>
    <property type="nucleotide sequence ID" value="NM_001371133.1"/>
</dbReference>
<dbReference type="RefSeq" id="NP_001358068.1">
    <molecule id="Q92823-6"/>
    <property type="nucleotide sequence ID" value="NM_001371139.1"/>
</dbReference>
<dbReference type="RefSeq" id="NP_001358080.1">
    <molecule id="Q92823-4"/>
    <property type="nucleotide sequence ID" value="NM_001371151.1"/>
</dbReference>
<dbReference type="RefSeq" id="NP_001358084.1">
    <molecule id="Q92823-6"/>
    <property type="nucleotide sequence ID" value="NM_001371155.1"/>
</dbReference>
<dbReference type="RefSeq" id="NP_001358091.1">
    <molecule id="Q92823-3"/>
    <property type="nucleotide sequence ID" value="NM_001371162.1"/>
</dbReference>
<dbReference type="RefSeq" id="NP_001358092.1">
    <molecule id="Q92823-6"/>
    <property type="nucleotide sequence ID" value="NM_001371163.1"/>
</dbReference>
<dbReference type="RefSeq" id="NP_001358094.1">
    <molecule id="Q92823-6"/>
    <property type="nucleotide sequence ID" value="NM_001371165.1"/>
</dbReference>
<dbReference type="RefSeq" id="NP_001358096.1">
    <molecule id="Q92823-6"/>
    <property type="nucleotide sequence ID" value="NM_001371167.1"/>
</dbReference>
<dbReference type="RefSeq" id="NP_001358100.1">
    <molecule id="Q92823-4"/>
    <property type="nucleotide sequence ID" value="NM_001371171.1"/>
</dbReference>
<dbReference type="RefSeq" id="NP_001358106.1">
    <molecule id="Q92823-6"/>
    <property type="nucleotide sequence ID" value="NM_001371177.1"/>
</dbReference>
<dbReference type="RefSeq" id="NP_001358107.1">
    <molecule id="Q92823-4"/>
    <property type="nucleotide sequence ID" value="NM_001371178.1"/>
</dbReference>
<dbReference type="RefSeq" id="NP_001358110.1">
    <molecule id="Q92823-6"/>
    <property type="nucleotide sequence ID" value="NM_001371181.1"/>
</dbReference>
<dbReference type="RefSeq" id="NP_005001.3">
    <molecule id="Q92823-4"/>
    <property type="nucleotide sequence ID" value="NM_005010.4"/>
</dbReference>
<dbReference type="RefSeq" id="XP_005250430.1">
    <property type="nucleotide sequence ID" value="XM_005250373.2"/>
</dbReference>
<dbReference type="RefSeq" id="XP_006716066.1">
    <molecule id="Q92823-5"/>
    <property type="nucleotide sequence ID" value="XM_006716003.3"/>
</dbReference>
<dbReference type="RefSeq" id="XP_016867746.1">
    <property type="nucleotide sequence ID" value="XM_017012257.1"/>
</dbReference>
<dbReference type="PDB" id="1UEN">
    <property type="method" value="NMR"/>
    <property type="chains" value="A=839-950"/>
</dbReference>
<dbReference type="PDB" id="1UEY">
    <property type="method" value="NMR"/>
    <property type="chains" value="A=638-751"/>
</dbReference>
<dbReference type="PDBsum" id="1UEN"/>
<dbReference type="PDBsum" id="1UEY"/>
<dbReference type="SMR" id="Q92823"/>
<dbReference type="BioGRID" id="110953">
    <property type="interactions" value="30"/>
</dbReference>
<dbReference type="FunCoup" id="Q92823">
    <property type="interactions" value="1099"/>
</dbReference>
<dbReference type="IntAct" id="Q92823">
    <property type="interactions" value="11"/>
</dbReference>
<dbReference type="MINT" id="Q92823"/>
<dbReference type="STRING" id="9606.ENSP00000368314"/>
<dbReference type="GlyConnect" id="821">
    <property type="glycosylation" value="17 N-Linked glycans (9 sites)"/>
</dbReference>
<dbReference type="GlyCosmos" id="Q92823">
    <property type="glycosylation" value="21 sites, 21 glycans"/>
</dbReference>
<dbReference type="GlyGen" id="Q92823">
    <property type="glycosylation" value="23 sites, 71 N-linked glycans (14 sites), 1 O-linked glycan (1 site)"/>
</dbReference>
<dbReference type="iPTMnet" id="Q92823"/>
<dbReference type="PhosphoSitePlus" id="Q92823"/>
<dbReference type="SwissPalm" id="Q92823"/>
<dbReference type="BioMuta" id="NRCAM"/>
<dbReference type="DMDM" id="215274127"/>
<dbReference type="jPOST" id="Q92823"/>
<dbReference type="MassIVE" id="Q92823"/>
<dbReference type="PaxDb" id="9606-ENSP00000368314"/>
<dbReference type="PeptideAtlas" id="Q92823"/>
<dbReference type="ProteomicsDB" id="19619"/>
<dbReference type="ProteomicsDB" id="75497">
    <molecule id="Q92823-1"/>
</dbReference>
<dbReference type="ProteomicsDB" id="75498">
    <molecule id="Q92823-2"/>
</dbReference>
<dbReference type="ProteomicsDB" id="75499">
    <molecule id="Q92823-3"/>
</dbReference>
<dbReference type="ProteomicsDB" id="75500">
    <molecule id="Q92823-4"/>
</dbReference>
<dbReference type="ProteomicsDB" id="75501">
    <molecule id="Q92823-5"/>
</dbReference>
<dbReference type="Pumba" id="Q92823"/>
<dbReference type="Antibodypedia" id="17285">
    <property type="antibodies" value="341 antibodies from 39 providers"/>
</dbReference>
<dbReference type="DNASU" id="4897"/>
<dbReference type="Ensembl" id="ENST00000351718.8">
    <molecule id="Q92823-4"/>
    <property type="protein sequence ID" value="ENSP00000325269.6"/>
    <property type="gene ID" value="ENSG00000091129.22"/>
</dbReference>
<dbReference type="Ensembl" id="ENST00000379024.8">
    <molecule id="Q92823-6"/>
    <property type="protein sequence ID" value="ENSP00000368310.4"/>
    <property type="gene ID" value="ENSG00000091129.22"/>
</dbReference>
<dbReference type="Ensembl" id="ENST00000379028.8">
    <molecule id="Q92823-1"/>
    <property type="protein sequence ID" value="ENSP00000368314.3"/>
    <property type="gene ID" value="ENSG00000091129.22"/>
</dbReference>
<dbReference type="GeneID" id="4897"/>
<dbReference type="KEGG" id="hsa:4897"/>
<dbReference type="MANE-Select" id="ENST00000379028.8">
    <property type="protein sequence ID" value="ENSP00000368314.3"/>
    <property type="RefSeq nucleotide sequence ID" value="NM_001037132.4"/>
    <property type="RefSeq protein sequence ID" value="NP_001032209.1"/>
</dbReference>
<dbReference type="UCSC" id="uc003vfc.4">
    <molecule id="Q92823-1"/>
    <property type="organism name" value="human"/>
</dbReference>
<dbReference type="AGR" id="HGNC:7994"/>
<dbReference type="CTD" id="4897"/>
<dbReference type="DisGeNET" id="4897"/>
<dbReference type="GeneCards" id="NRCAM"/>
<dbReference type="HGNC" id="HGNC:7994">
    <property type="gene designation" value="NRCAM"/>
</dbReference>
<dbReference type="HPA" id="ENSG00000091129">
    <property type="expression patterns" value="Tissue enhanced (brain)"/>
</dbReference>
<dbReference type="MalaCards" id="NRCAM"/>
<dbReference type="MIM" id="601581">
    <property type="type" value="gene"/>
</dbReference>
<dbReference type="MIM" id="619833">
    <property type="type" value="phenotype"/>
</dbReference>
<dbReference type="neXtProt" id="NX_Q92823"/>
<dbReference type="OpenTargets" id="ENSG00000091129"/>
<dbReference type="Orphanet" id="528084">
    <property type="disease" value="Non-specific syndromic intellectual disability"/>
</dbReference>
<dbReference type="PharmGKB" id="PA31773"/>
<dbReference type="VEuPathDB" id="HostDB:ENSG00000091129"/>
<dbReference type="eggNOG" id="KOG3513">
    <property type="taxonomic scope" value="Eukaryota"/>
</dbReference>
<dbReference type="GeneTree" id="ENSGT00940000155419"/>
<dbReference type="HOGENOM" id="CLU_005756_1_1_1"/>
<dbReference type="InParanoid" id="Q92823"/>
<dbReference type="OMA" id="QTHAMEV"/>
<dbReference type="OrthoDB" id="6244967at2759"/>
<dbReference type="PAN-GO" id="Q92823">
    <property type="GO annotations" value="6 GO annotations based on evolutionary models"/>
</dbReference>
<dbReference type="PhylomeDB" id="Q92823"/>
<dbReference type="TreeFam" id="TF351098"/>
<dbReference type="PathwayCommons" id="Q92823"/>
<dbReference type="Reactome" id="R-HSA-445095">
    <property type="pathway name" value="Interaction between L1 and Ankyrins"/>
</dbReference>
<dbReference type="Reactome" id="R-HSA-447038">
    <property type="pathway name" value="NrCAM interactions"/>
</dbReference>
<dbReference type="Reactome" id="R-HSA-447043">
    <property type="pathway name" value="Neurofascin interactions"/>
</dbReference>
<dbReference type="SignaLink" id="Q92823"/>
<dbReference type="SIGNOR" id="Q92823"/>
<dbReference type="BioGRID-ORCS" id="4897">
    <property type="hits" value="5 hits in 1154 CRISPR screens"/>
</dbReference>
<dbReference type="CD-CODE" id="FB4E32DD">
    <property type="entry name" value="Presynaptic clusters and postsynaptic densities"/>
</dbReference>
<dbReference type="ChiTaRS" id="NRCAM">
    <property type="organism name" value="human"/>
</dbReference>
<dbReference type="EvolutionaryTrace" id="Q92823"/>
<dbReference type="GeneWiki" id="NRCAM"/>
<dbReference type="GenomeRNAi" id="4897"/>
<dbReference type="Pharos" id="Q92823">
    <property type="development level" value="Tbio"/>
</dbReference>
<dbReference type="PRO" id="PR:Q92823"/>
<dbReference type="Proteomes" id="UP000005640">
    <property type="component" value="Chromosome 7"/>
</dbReference>
<dbReference type="RNAct" id="Q92823">
    <property type="molecule type" value="protein"/>
</dbReference>
<dbReference type="Bgee" id="ENSG00000091129">
    <property type="expression patterns" value="Expressed in lateral nuclear group of thalamus and 165 other cell types or tissues"/>
</dbReference>
<dbReference type="ExpressionAtlas" id="Q92823">
    <property type="expression patterns" value="baseline and differential"/>
</dbReference>
<dbReference type="GO" id="GO:0030424">
    <property type="term" value="C:axon"/>
    <property type="evidence" value="ECO:0000318"/>
    <property type="project" value="GO_Central"/>
</dbReference>
<dbReference type="GO" id="GO:0043194">
    <property type="term" value="C:axon initial segment"/>
    <property type="evidence" value="ECO:0000250"/>
    <property type="project" value="BHF-UCL"/>
</dbReference>
<dbReference type="GO" id="GO:0009897">
    <property type="term" value="C:external side of plasma membrane"/>
    <property type="evidence" value="ECO:0000303"/>
    <property type="project" value="UniProtKB"/>
</dbReference>
<dbReference type="GO" id="GO:0005576">
    <property type="term" value="C:extracellular region"/>
    <property type="evidence" value="ECO:0007669"/>
    <property type="project" value="UniProtKB-SubCell"/>
</dbReference>
<dbReference type="GO" id="GO:0098978">
    <property type="term" value="C:glutamatergic synapse"/>
    <property type="evidence" value="ECO:0007669"/>
    <property type="project" value="Ensembl"/>
</dbReference>
<dbReference type="GO" id="GO:0043005">
    <property type="term" value="C:neuron projection"/>
    <property type="evidence" value="ECO:0000303"/>
    <property type="project" value="UniProtKB"/>
</dbReference>
<dbReference type="GO" id="GO:0005886">
    <property type="term" value="C:plasma membrane"/>
    <property type="evidence" value="ECO:0000318"/>
    <property type="project" value="GO_Central"/>
</dbReference>
<dbReference type="GO" id="GO:0098839">
    <property type="term" value="C:postsynaptic density membrane"/>
    <property type="evidence" value="ECO:0007669"/>
    <property type="project" value="Ensembl"/>
</dbReference>
<dbReference type="GO" id="GO:0030506">
    <property type="term" value="F:ankyrin binding"/>
    <property type="evidence" value="ECO:0000314"/>
    <property type="project" value="UniProtKB"/>
</dbReference>
<dbReference type="GO" id="GO:0098632">
    <property type="term" value="F:cell-cell adhesion mediator activity"/>
    <property type="evidence" value="ECO:0000318"/>
    <property type="project" value="GO_Central"/>
</dbReference>
<dbReference type="GO" id="GO:0086080">
    <property type="term" value="F:protein binding involved in heterotypic cell-cell adhesion"/>
    <property type="evidence" value="ECO:0007669"/>
    <property type="project" value="Ensembl"/>
</dbReference>
<dbReference type="GO" id="GO:0001525">
    <property type="term" value="P:angiogenesis"/>
    <property type="evidence" value="ECO:0000270"/>
    <property type="project" value="UniProtKB"/>
</dbReference>
<dbReference type="GO" id="GO:0007411">
    <property type="term" value="P:axon guidance"/>
    <property type="evidence" value="ECO:0000318"/>
    <property type="project" value="GO_Central"/>
</dbReference>
<dbReference type="GO" id="GO:0007413">
    <property type="term" value="P:axonal fasciculation"/>
    <property type="evidence" value="ECO:0000303"/>
    <property type="project" value="UniProtKB"/>
</dbReference>
<dbReference type="GO" id="GO:0007409">
    <property type="term" value="P:axonogenesis"/>
    <property type="evidence" value="ECO:0000303"/>
    <property type="project" value="UniProtKB"/>
</dbReference>
<dbReference type="GO" id="GO:0098609">
    <property type="term" value="P:cell-cell adhesion"/>
    <property type="evidence" value="ECO:0000318"/>
    <property type="project" value="GO_Central"/>
</dbReference>
<dbReference type="GO" id="GO:0007417">
    <property type="term" value="P:central nervous system development"/>
    <property type="evidence" value="ECO:0000315"/>
    <property type="project" value="UniProtKB"/>
</dbReference>
<dbReference type="GO" id="GO:0045162">
    <property type="term" value="P:clustering of voltage-gated sodium channels"/>
    <property type="evidence" value="ECO:0000314"/>
    <property type="project" value="UniProtKB"/>
</dbReference>
<dbReference type="GO" id="GO:0001764">
    <property type="term" value="P:neuron migration"/>
    <property type="evidence" value="ECO:0000303"/>
    <property type="project" value="UniProtKB"/>
</dbReference>
<dbReference type="GO" id="GO:0019227">
    <property type="term" value="P:neuronal action potential propagation"/>
    <property type="evidence" value="ECO:0007669"/>
    <property type="project" value="Ensembl"/>
</dbReference>
<dbReference type="GO" id="GO:0045666">
    <property type="term" value="P:positive regulation of neuron differentiation"/>
    <property type="evidence" value="ECO:0000303"/>
    <property type="project" value="UniProtKB"/>
</dbReference>
<dbReference type="GO" id="GO:0008104">
    <property type="term" value="P:protein localization"/>
    <property type="evidence" value="ECO:0007669"/>
    <property type="project" value="Ensembl"/>
</dbReference>
<dbReference type="GO" id="GO:0030516">
    <property type="term" value="P:regulation of axon extension"/>
    <property type="evidence" value="ECO:0000303"/>
    <property type="project" value="UniProtKB"/>
</dbReference>
<dbReference type="GO" id="GO:0010975">
    <property type="term" value="P:regulation of neuron projection development"/>
    <property type="evidence" value="ECO:0007669"/>
    <property type="project" value="Ensembl"/>
</dbReference>
<dbReference type="GO" id="GO:0099175">
    <property type="term" value="P:regulation of postsynapse organization"/>
    <property type="evidence" value="ECO:0007669"/>
    <property type="project" value="Ensembl"/>
</dbReference>
<dbReference type="GO" id="GO:0031290">
    <property type="term" value="P:retinal ganglion cell axon guidance"/>
    <property type="evidence" value="ECO:0007669"/>
    <property type="project" value="Ensembl"/>
</dbReference>
<dbReference type="GO" id="GO:0007416">
    <property type="term" value="P:synapse assembly"/>
    <property type="evidence" value="ECO:0000304"/>
    <property type="project" value="UniProtKB"/>
</dbReference>
<dbReference type="CDD" id="cd00063">
    <property type="entry name" value="FN3"/>
    <property type="match status" value="5"/>
</dbReference>
<dbReference type="CDD" id="cd05868">
    <property type="entry name" value="Ig4_NrCAM"/>
    <property type="match status" value="1"/>
</dbReference>
<dbReference type="CDD" id="cd05874">
    <property type="entry name" value="IgI_NrCAM"/>
    <property type="match status" value="1"/>
</dbReference>
<dbReference type="FunFam" id="2.60.40.10:FF:000057">
    <property type="entry name" value="neural cell adhesion molecule L1"/>
    <property type="match status" value="1"/>
</dbReference>
<dbReference type="FunFam" id="2.60.40.10:FF:000363">
    <property type="entry name" value="neurofascin isoform X1"/>
    <property type="match status" value="1"/>
</dbReference>
<dbReference type="FunFam" id="2.60.40.10:FF:000512">
    <property type="entry name" value="neurofascin isoform X1"/>
    <property type="match status" value="1"/>
</dbReference>
<dbReference type="FunFam" id="2.60.40.10:FF:000005">
    <property type="entry name" value="Neuronal cell adhesion molecule"/>
    <property type="match status" value="1"/>
</dbReference>
<dbReference type="FunFam" id="2.60.40.10:FF:000038">
    <property type="entry name" value="Neuronal cell adhesion molecule"/>
    <property type="match status" value="1"/>
</dbReference>
<dbReference type="FunFam" id="2.60.40.10:FF:000078">
    <property type="entry name" value="Neuronal cell adhesion molecule"/>
    <property type="match status" value="1"/>
</dbReference>
<dbReference type="FunFam" id="2.60.40.10:FF:000114">
    <property type="entry name" value="Neuronal cell adhesion molecule"/>
    <property type="match status" value="1"/>
</dbReference>
<dbReference type="FunFam" id="2.60.40.10:FF:000347">
    <property type="entry name" value="Neuronal cell adhesion molecule"/>
    <property type="match status" value="1"/>
</dbReference>
<dbReference type="FunFam" id="2.60.40.10:FF:000836">
    <property type="entry name" value="Neuronal cell adhesion molecule"/>
    <property type="match status" value="1"/>
</dbReference>
<dbReference type="FunFam" id="2.60.40.10:FF:000100">
    <property type="entry name" value="Neuronal cell adhesion molecule a"/>
    <property type="match status" value="1"/>
</dbReference>
<dbReference type="FunFam" id="2.60.40.10:FF:000332">
    <property type="entry name" value="neuronal cell adhesion molecule isoform X2"/>
    <property type="match status" value="1"/>
</dbReference>
<dbReference type="Gene3D" id="2.60.40.10">
    <property type="entry name" value="Immunoglobulins"/>
    <property type="match status" value="11"/>
</dbReference>
<dbReference type="InterPro" id="IPR003961">
    <property type="entry name" value="FN3_dom"/>
</dbReference>
<dbReference type="InterPro" id="IPR036116">
    <property type="entry name" value="FN3_sf"/>
</dbReference>
<dbReference type="InterPro" id="IPR007110">
    <property type="entry name" value="Ig-like_dom"/>
</dbReference>
<dbReference type="InterPro" id="IPR036179">
    <property type="entry name" value="Ig-like_dom_sf"/>
</dbReference>
<dbReference type="InterPro" id="IPR013783">
    <property type="entry name" value="Ig-like_fold"/>
</dbReference>
<dbReference type="InterPro" id="IPR003006">
    <property type="entry name" value="Ig/MHC_CS"/>
</dbReference>
<dbReference type="InterPro" id="IPR013098">
    <property type="entry name" value="Ig_I-set"/>
</dbReference>
<dbReference type="InterPro" id="IPR003599">
    <property type="entry name" value="Ig_sub"/>
</dbReference>
<dbReference type="InterPro" id="IPR003598">
    <property type="entry name" value="Ig_sub2"/>
</dbReference>
<dbReference type="InterPro" id="IPR051170">
    <property type="entry name" value="Neural/epithelial_adhesion"/>
</dbReference>
<dbReference type="InterPro" id="IPR026966">
    <property type="entry name" value="Neurofascin/L1/NrCAM_C"/>
</dbReference>
<dbReference type="PANTHER" id="PTHR12231">
    <property type="entry name" value="CTX-RELATED TYPE I TRANSMEMBRANE PROTEIN"/>
    <property type="match status" value="1"/>
</dbReference>
<dbReference type="PANTHER" id="PTHR12231:SF257">
    <property type="entry name" value="NEURAL CELL ADHESION MOLECULE L1-LIKE PROTEIN"/>
    <property type="match status" value="1"/>
</dbReference>
<dbReference type="Pfam" id="PF13882">
    <property type="entry name" value="Bravo_FIGEY"/>
    <property type="match status" value="1"/>
</dbReference>
<dbReference type="Pfam" id="PF00041">
    <property type="entry name" value="fn3"/>
    <property type="match status" value="4"/>
</dbReference>
<dbReference type="Pfam" id="PF07679">
    <property type="entry name" value="I-set"/>
    <property type="match status" value="2"/>
</dbReference>
<dbReference type="Pfam" id="PF13927">
    <property type="entry name" value="Ig_3"/>
    <property type="match status" value="3"/>
</dbReference>
<dbReference type="SMART" id="SM00060">
    <property type="entry name" value="FN3"/>
    <property type="match status" value="5"/>
</dbReference>
<dbReference type="SMART" id="SM00409">
    <property type="entry name" value="IG"/>
    <property type="match status" value="6"/>
</dbReference>
<dbReference type="SMART" id="SM00408">
    <property type="entry name" value="IGc2"/>
    <property type="match status" value="6"/>
</dbReference>
<dbReference type="SUPFAM" id="SSF49265">
    <property type="entry name" value="Fibronectin type III"/>
    <property type="match status" value="3"/>
</dbReference>
<dbReference type="SUPFAM" id="SSF48726">
    <property type="entry name" value="Immunoglobulin"/>
    <property type="match status" value="6"/>
</dbReference>
<dbReference type="PROSITE" id="PS50853">
    <property type="entry name" value="FN3"/>
    <property type="match status" value="5"/>
</dbReference>
<dbReference type="PROSITE" id="PS50835">
    <property type="entry name" value="IG_LIKE"/>
    <property type="match status" value="6"/>
</dbReference>
<dbReference type="PROSITE" id="PS00290">
    <property type="entry name" value="IG_MHC"/>
    <property type="match status" value="1"/>
</dbReference>
<sequence length="1304" mass="143890">MQLKIMPKKKRLSAGRVPLILFLCQMISALEVPLDPKLLEDLVQPPTITQQSPKDYIIDPRENIVIQCEAKGKPPPSFSWTRNGTHFDIDKDPLVTMKPGTGTLIINIMSEGKAETYEGVYQCTARNERGAAVSNNIVVRPSRSPLWTKEKLEPITLQSGQSLVLPCRPPIGLPPPIIFWMDNSFQRLPQSERVSQGLNGDLYFSNVLPEDTREDYICYARFNHTQTIQQKQPISVKVISVDELNDTIAANLSDTEFYGAKSSRERPPTFLTPEGNASNKEELRGNVLSLECIAEGLPTPIIYWAKEDGMLPKNRTVYKNFEKTLQIIHVSEADSGNYQCIAKNALGAIHHTISVRVKAAPYWITAPQNLVLSPGEDGTLICRANGNPKPRISWLTNGVPIEIAPDDPSRKIDGDTIIFSNVQERSSAVYQCNASNEYGYLLANAFVNVLAEPPRILTPANTLYQVIANRPALLDCAFFGSPLPTIEWFKGAKGSALHEDIYVLHENGTLEIPVAQKDSTGTYTCVARNKLGMAKNEVHLEIKDPTWIVKQPEYAVVQRGSMVSFECKVKHDHTLSLTVLWLKDNRELPSDERFTVDKDHLVVADVSDDDSGTYTCVANTTLDSVSASAVLSVVAPTPTPAPVYDVPNPPFDLELTDQLDKSVQLSWTPGDDNNSPITKFIIEYEDAMHKPGLWHHQTEVSGTQTTAQLKLSPYVNYSFRVMAVNSIGKSLPSEASEQYLTKASEPDKNPTAVEGLGSEPDNLVITWKPLNGFESNGPGLQYKVSWRQKDGDDEWTSVVVANVSKYIVSGTPTFVPYLIKVQALNDMGFAPEPAVVMGHSGEDLPMVAPGNVRVNVVNSTLAEVHWDPVPLKSIRGHLQGYRIYYWKTQSSSKRNRRHIEKKILTFQGSKTHGMLPGLEPFSHYTLNVRVVNGKGEGPASPDRVFNTPEGVPSAPSSLKIVNPTLDSLTLEWDPPSHPNGILTEYTLKYQPINSTHELGPLVDLKIPANKTRWTLKNLNFSTRYKFYFYAQTSAGSGSQITEEAVTTVDEAGILPPDVGAGKVQAVNPRISNLTAAAAETYANISWEYEGPEHVNFYVEYGVAGSKEEWRKEIVNGSRSFFGLKGLMPGTAYKVRVGAVGDSGFVSSEDVFETGPAMASRQVDIATQGWFIGLMCAVALLILILLIVCFIRRNKGGKYPVKEKEDAHADPEIQPMKEDDGTFGEYSDAEDHKPLKKGSRTPSDRTVKKEDSDDSLVDYGEGVNGQFNEDGSFIGQYSGKKEKEPAEGNESSEAPSPVNAMNSFV</sequence>
<gene>
    <name type="primary">NRCAM</name>
    <name type="synonym">KIAA0343</name>
</gene>
<name>NRCAM_HUMAN</name>
<accession>Q92823</accession>
<accession>A4D0S3</accession>
<accession>E9PDA4</accession>
<accession>O15051</accession>
<accession>O15179</accession>
<accession>Q14BM2</accession>
<accession>Q9UHI3</accession>
<accession>Q9UHI4</accession>